<accession>Q54Y72</accession>
<proteinExistence type="inferred from homology"/>
<keyword id="KW-0963">Cytoplasm</keyword>
<keyword id="KW-0343">GTPase activation</keyword>
<keyword id="KW-1185">Reference proteome</keyword>
<protein>
    <recommendedName>
        <fullName>Rho GTPase-activating protein gacA</fullName>
    </recommendedName>
    <alternativeName>
        <fullName>GTPase activating factor for raC protein A</fullName>
    </alternativeName>
</protein>
<comment type="function">
    <text evidence="1">Rho GTPase-activating protein involved in the signal transduction pathway.</text>
</comment>
<comment type="subcellular location">
    <subcellularLocation>
        <location evidence="1">Cytoplasm</location>
    </subcellularLocation>
</comment>
<dbReference type="EMBL" id="AAFI02000023">
    <property type="protein sequence ID" value="EAL68363.1"/>
    <property type="molecule type" value="Genomic_DNA"/>
</dbReference>
<dbReference type="RefSeq" id="XP_642330.1">
    <property type="nucleotide sequence ID" value="XM_637238.1"/>
</dbReference>
<dbReference type="SMR" id="Q54Y72"/>
<dbReference type="STRING" id="44689.Q54Y72"/>
<dbReference type="PaxDb" id="44689-DDB0233873"/>
<dbReference type="EnsemblProtists" id="EAL68363">
    <property type="protein sequence ID" value="EAL68363"/>
    <property type="gene ID" value="DDB_G0278381"/>
</dbReference>
<dbReference type="GeneID" id="8621536"/>
<dbReference type="KEGG" id="ddi:DDB_G0278381"/>
<dbReference type="dictyBase" id="DDB_G0278381">
    <property type="gene designation" value="gacA"/>
</dbReference>
<dbReference type="VEuPathDB" id="AmoebaDB:DDB_G0278381"/>
<dbReference type="eggNOG" id="KOG4270">
    <property type="taxonomic scope" value="Eukaryota"/>
</dbReference>
<dbReference type="HOGENOM" id="CLU_859045_0_0_1"/>
<dbReference type="InParanoid" id="Q54Y72"/>
<dbReference type="OMA" id="IWYRELP"/>
<dbReference type="PhylomeDB" id="Q54Y72"/>
<dbReference type="PRO" id="PR:Q54Y72"/>
<dbReference type="Proteomes" id="UP000002195">
    <property type="component" value="Chromosome 3"/>
</dbReference>
<dbReference type="GO" id="GO:0005737">
    <property type="term" value="C:cytoplasm"/>
    <property type="evidence" value="ECO:0007669"/>
    <property type="project" value="UniProtKB-SubCell"/>
</dbReference>
<dbReference type="GO" id="GO:0005096">
    <property type="term" value="F:GTPase activator activity"/>
    <property type="evidence" value="ECO:0007669"/>
    <property type="project" value="UniProtKB-KW"/>
</dbReference>
<dbReference type="GO" id="GO:0007165">
    <property type="term" value="P:signal transduction"/>
    <property type="evidence" value="ECO:0007669"/>
    <property type="project" value="InterPro"/>
</dbReference>
<dbReference type="CDD" id="cd00159">
    <property type="entry name" value="RhoGAP"/>
    <property type="match status" value="1"/>
</dbReference>
<dbReference type="Gene3D" id="2.60.40.10">
    <property type="entry name" value="Immunoglobulins"/>
    <property type="match status" value="1"/>
</dbReference>
<dbReference type="Gene3D" id="1.10.555.10">
    <property type="entry name" value="Rho GTPase activation protein"/>
    <property type="match status" value="1"/>
</dbReference>
<dbReference type="InterPro" id="IPR013783">
    <property type="entry name" value="Ig-like_fold"/>
</dbReference>
<dbReference type="InterPro" id="IPR008936">
    <property type="entry name" value="Rho_GTPase_activation_prot"/>
</dbReference>
<dbReference type="InterPro" id="IPR000198">
    <property type="entry name" value="RhoGAP_dom"/>
</dbReference>
<dbReference type="InterPro" id="IPR044785">
    <property type="entry name" value="RopGAP1-5"/>
</dbReference>
<dbReference type="PANTHER" id="PTHR23177">
    <property type="entry name" value="MKIAA1688 PROTEIN"/>
    <property type="match status" value="1"/>
</dbReference>
<dbReference type="PANTHER" id="PTHR23177:SF35">
    <property type="entry name" value="RHO GTPASE-ACTIVATING PROTEIN GACA"/>
    <property type="match status" value="1"/>
</dbReference>
<dbReference type="Pfam" id="PF24507">
    <property type="entry name" value="Ig_CFAP65_4th"/>
    <property type="match status" value="1"/>
</dbReference>
<dbReference type="Pfam" id="PF00620">
    <property type="entry name" value="RhoGAP"/>
    <property type="match status" value="1"/>
</dbReference>
<dbReference type="SMART" id="SM00324">
    <property type="entry name" value="RhoGAP"/>
    <property type="match status" value="1"/>
</dbReference>
<dbReference type="SUPFAM" id="SSF48350">
    <property type="entry name" value="GTPase activation domain, GAP"/>
    <property type="match status" value="1"/>
</dbReference>
<dbReference type="PROSITE" id="PS50238">
    <property type="entry name" value="RHOGAP"/>
    <property type="match status" value="1"/>
</dbReference>
<evidence type="ECO:0000250" key="1"/>
<evidence type="ECO:0000255" key="2">
    <source>
        <dbReference type="PROSITE-ProRule" id="PRU00172"/>
    </source>
</evidence>
<feature type="chain" id="PRO_0000380193" description="Rho GTPase-activating protein gacA">
    <location>
        <begin position="1"/>
        <end position="338"/>
    </location>
</feature>
<feature type="domain" description="Rho-GAP" evidence="2">
    <location>
        <begin position="149"/>
        <end position="327"/>
    </location>
</feature>
<feature type="site" description="Arginine finger; crucial for GTP hydrolysis by stabilizing the transition state" evidence="2">
    <location>
        <position position="185"/>
    </location>
</feature>
<gene>
    <name type="primary">gacA</name>
    <name type="ORF">DDB_G0278381</name>
</gene>
<organism>
    <name type="scientific">Dictyostelium discoideum</name>
    <name type="common">Social amoeba</name>
    <dbReference type="NCBI Taxonomy" id="44689"/>
    <lineage>
        <taxon>Eukaryota</taxon>
        <taxon>Amoebozoa</taxon>
        <taxon>Evosea</taxon>
        <taxon>Eumycetozoa</taxon>
        <taxon>Dictyostelia</taxon>
        <taxon>Dictyosteliales</taxon>
        <taxon>Dictyosteliaceae</taxon>
        <taxon>Dictyostelium</taxon>
    </lineage>
</organism>
<reference key="1">
    <citation type="journal article" date="2005" name="Nature">
        <title>The genome of the social amoeba Dictyostelium discoideum.</title>
        <authorList>
            <person name="Eichinger L."/>
            <person name="Pachebat J.A."/>
            <person name="Gloeckner G."/>
            <person name="Rajandream M.A."/>
            <person name="Sucgang R."/>
            <person name="Berriman M."/>
            <person name="Song J."/>
            <person name="Olsen R."/>
            <person name="Szafranski K."/>
            <person name="Xu Q."/>
            <person name="Tunggal B."/>
            <person name="Kummerfeld S."/>
            <person name="Madera M."/>
            <person name="Konfortov B.A."/>
            <person name="Rivero F."/>
            <person name="Bankier A.T."/>
            <person name="Lehmann R."/>
            <person name="Hamlin N."/>
            <person name="Davies R."/>
            <person name="Gaudet P."/>
            <person name="Fey P."/>
            <person name="Pilcher K."/>
            <person name="Chen G."/>
            <person name="Saunders D."/>
            <person name="Sodergren E.J."/>
            <person name="Davis P."/>
            <person name="Kerhornou A."/>
            <person name="Nie X."/>
            <person name="Hall N."/>
            <person name="Anjard C."/>
            <person name="Hemphill L."/>
            <person name="Bason N."/>
            <person name="Farbrother P."/>
            <person name="Desany B."/>
            <person name="Just E."/>
            <person name="Morio T."/>
            <person name="Rost R."/>
            <person name="Churcher C.M."/>
            <person name="Cooper J."/>
            <person name="Haydock S."/>
            <person name="van Driessche N."/>
            <person name="Cronin A."/>
            <person name="Goodhead I."/>
            <person name="Muzny D.M."/>
            <person name="Mourier T."/>
            <person name="Pain A."/>
            <person name="Lu M."/>
            <person name="Harper D."/>
            <person name="Lindsay R."/>
            <person name="Hauser H."/>
            <person name="James K.D."/>
            <person name="Quiles M."/>
            <person name="Madan Babu M."/>
            <person name="Saito T."/>
            <person name="Buchrieser C."/>
            <person name="Wardroper A."/>
            <person name="Felder M."/>
            <person name="Thangavelu M."/>
            <person name="Johnson D."/>
            <person name="Knights A."/>
            <person name="Loulseged H."/>
            <person name="Mungall K.L."/>
            <person name="Oliver K."/>
            <person name="Price C."/>
            <person name="Quail M.A."/>
            <person name="Urushihara H."/>
            <person name="Hernandez J."/>
            <person name="Rabbinowitsch E."/>
            <person name="Steffen D."/>
            <person name="Sanders M."/>
            <person name="Ma J."/>
            <person name="Kohara Y."/>
            <person name="Sharp S."/>
            <person name="Simmonds M.N."/>
            <person name="Spiegler S."/>
            <person name="Tivey A."/>
            <person name="Sugano S."/>
            <person name="White B."/>
            <person name="Walker D."/>
            <person name="Woodward J.R."/>
            <person name="Winckler T."/>
            <person name="Tanaka Y."/>
            <person name="Shaulsky G."/>
            <person name="Schleicher M."/>
            <person name="Weinstock G.M."/>
            <person name="Rosenthal A."/>
            <person name="Cox E.C."/>
            <person name="Chisholm R.L."/>
            <person name="Gibbs R.A."/>
            <person name="Loomis W.F."/>
            <person name="Platzer M."/>
            <person name="Kay R.R."/>
            <person name="Williams J.G."/>
            <person name="Dear P.H."/>
            <person name="Noegel A.A."/>
            <person name="Barrell B.G."/>
            <person name="Kuspa A."/>
        </authorList>
    </citation>
    <scope>NUCLEOTIDE SEQUENCE [LARGE SCALE GENOMIC DNA]</scope>
    <source>
        <strain>AX4</strain>
    </source>
</reference>
<sequence>MGSSSSKSSSSVTVASSIDYKAKPTIDELGTSNYSGGLEVSKNLLDFNLGEKPCPLKSVVQDQFTISNSSKTKLKFHFEPLQPKEFQLSFSPTSGSLDKGKSKTIKVKLMVNQKINTNHKVVLRVEGGASHFLTVKIRCETGVFGVDPNTLEHVEDEGFRVPYILALMKRSLIDNGGLQQEGIFRLAGEQTEIKRLKEAMNRNDFTSSTDINTVASLIKIWYRELPTPILNSIPTEKIFYSTDIDECVQSAKNLPEPQKSLLDWLMHLLLMVSSFSDVNKMTAQNLAIVVAPNLYDVSSSNPMEGLVLSQKCVQFLHNVLSHKVAVHKRESVAYEVLS</sequence>
<name>GACA_DICDI</name>